<comment type="function">
    <text evidence="1">Virulence-associated protein essential for survival of the bacterium within the tick host and therefore within the natural life cycle of the spirochete.</text>
</comment>
<comment type="subcellular location">
    <subcellularLocation>
        <location evidence="3">Cell outer membrane</location>
    </subcellularLocation>
</comment>
<comment type="similarity">
    <text evidence="3">Belongs to the BptA family.</text>
</comment>
<organism>
    <name type="scientific">Borreliella valaisiana</name>
    <name type="common">Borrelia valaisiana</name>
    <dbReference type="NCBI Taxonomy" id="62088"/>
    <lineage>
        <taxon>Bacteria</taxon>
        <taxon>Pseudomonadati</taxon>
        <taxon>Spirochaetota</taxon>
        <taxon>Spirochaetia</taxon>
        <taxon>Spirochaetales</taxon>
        <taxon>Borreliaceae</taxon>
        <taxon>Borreliella</taxon>
    </lineage>
</organism>
<gene>
    <name type="primary">bptA</name>
</gene>
<reference key="1">
    <citation type="journal article" date="2005" name="Proc. Natl. Acad. Sci. U.S.A.">
        <title>bptA (bbe16) is essential for the persistence of the Lyme disease spirochete, Borrelia burgdorferi, in its natural tick vector.</title>
        <authorList>
            <person name="Revel A.T."/>
            <person name="Blevins J.S."/>
            <person name="Almazan C."/>
            <person name="Neil L."/>
            <person name="Kocan K.M."/>
            <person name="de la Fuente J."/>
            <person name="Hagman K.E."/>
            <person name="Norgard M.V."/>
        </authorList>
    </citation>
    <scope>NUCLEOTIDE SEQUENCE [GENOMIC DNA]</scope>
    <source>
        <strain>DSM 21467 / CIP 105367 / VS116</strain>
    </source>
</reference>
<dbReference type="EMBL" id="AY894348">
    <property type="protein sequence ID" value="AAX69075.1"/>
    <property type="molecule type" value="Genomic_DNA"/>
</dbReference>
<dbReference type="GO" id="GO:0009279">
    <property type="term" value="C:cell outer membrane"/>
    <property type="evidence" value="ECO:0007669"/>
    <property type="project" value="UniProtKB-SubCell"/>
</dbReference>
<dbReference type="InterPro" id="IPR031471">
    <property type="entry name" value="BptA"/>
</dbReference>
<dbReference type="NCBIfam" id="NF045772">
    <property type="entry name" value="VirAssocBptA"/>
    <property type="match status" value="1"/>
</dbReference>
<dbReference type="Pfam" id="PF17044">
    <property type="entry name" value="BPTA"/>
    <property type="match status" value="1"/>
</dbReference>
<keyword id="KW-0998">Cell outer membrane</keyword>
<keyword id="KW-0472">Membrane</keyword>
<keyword id="KW-0732">Signal</keyword>
<keyword id="KW-0843">Virulence</keyword>
<feature type="signal peptide" evidence="2">
    <location>
        <begin position="1"/>
        <end position="23"/>
    </location>
</feature>
<feature type="chain" id="PRO_0000240476" description="Protein BptA">
    <location>
        <begin position="24"/>
        <end position="206"/>
    </location>
</feature>
<protein>
    <recommendedName>
        <fullName>Protein BptA</fullName>
    </recommendedName>
    <alternativeName>
        <fullName>Borrelial persistence in ticks protein A</fullName>
    </alternativeName>
</protein>
<accession>Q56NH0</accession>
<sequence>MSRILFYGLLLICVFLGFFFFFKKENNVIYNKIIQKSEDKVFTDETYTYLFKDGNLKELVFIKSEFMDPKLEHKKNRNMTGYLIDAYRAMSPSYNFDFAVHDNKILGFKSVIFEGFGDAQVSKHENNLPSEKWQQLKGFNIGDPNINEKFFHLKFPFTVKNTLRVTLSKGFFNKIKRLKRLKIVLVSNEDKEYKIDIENFLPKYNL</sequence>
<proteinExistence type="inferred from homology"/>
<evidence type="ECO:0000250" key="1"/>
<evidence type="ECO:0000255" key="2"/>
<evidence type="ECO:0000305" key="3"/>
<name>BPTA_BORVA</name>